<gene>
    <name type="primary">Prokr1</name>
    <name type="synonym">Gpr73</name>
    <name type="synonym">Pkr1</name>
</gene>
<comment type="function">
    <text evidence="1">Receptor for prokineticin 1. Exclusively coupled to the G(q) subclass of heteromeric G proteins. Activation leads to mobilization of calcium, stimulation of phosphoinositide turnover and activation of p44/p42 mitogen-activated protein kinase. May play a role during early pregnancy (By similarity).</text>
</comment>
<comment type="subcellular location">
    <subcellularLocation>
        <location>Cell membrane</location>
        <topology>Multi-pass membrane protein</topology>
    </subcellularLocation>
</comment>
<comment type="tissue specificity">
    <text>Expressed at high levels in the heart, skeletal muscle and pancreas. Expressed at lower levels in the brain, lung, liver and kidney.</text>
</comment>
<comment type="similarity">
    <text evidence="3">Belongs to the G-protein coupled receptor 1 family.</text>
</comment>
<sequence length="393" mass="44597">METTVGALGENTTDTFTDFFSALDGHEAQTGSLPFTFSYGDYDMPLDEEEDVTNSRTFFAAKIVIGMALVGIMLVCGIGNFIFITALARYKKLRNLTNLLIANLAISDFLVAIVCCPFEMDYYVVRQLSWEHGHVLCASVNYLRTVSLYVSTNALLAIAIDRYLAIVHPLRPRMKCQTAAGLIFLVWSVSILIAIPAAYFTTETVLVIVERQEKIFCGQIWPVDQQFYYRSYFLLVFGLEFVGPVVAMTLCYARVSRELWFKAVPGFQTEQIRRRLRCRRRTVLGLVCVLSAYVLCWAPFYGFTIVRDFFPSVFVKEKHYLTAFYVVECIAMSNSMINTLCFVTVRNNTSKYLKRILRLQWRASPSGSKASADLDLRTTGIPATEEVDCIRLK</sequence>
<proteinExistence type="evidence at transcript level"/>
<organism>
    <name type="scientific">Mus musculus</name>
    <name type="common">Mouse</name>
    <dbReference type="NCBI Taxonomy" id="10090"/>
    <lineage>
        <taxon>Eukaryota</taxon>
        <taxon>Metazoa</taxon>
        <taxon>Chordata</taxon>
        <taxon>Craniata</taxon>
        <taxon>Vertebrata</taxon>
        <taxon>Euteleostomi</taxon>
        <taxon>Mammalia</taxon>
        <taxon>Eutheria</taxon>
        <taxon>Euarchontoglires</taxon>
        <taxon>Glires</taxon>
        <taxon>Rodentia</taxon>
        <taxon>Myomorpha</taxon>
        <taxon>Muroidea</taxon>
        <taxon>Muridae</taxon>
        <taxon>Murinae</taxon>
        <taxon>Mus</taxon>
        <taxon>Mus</taxon>
    </lineage>
</organism>
<dbReference type="EMBL" id="AF236082">
    <property type="protein sequence ID" value="AAF43706.1"/>
    <property type="molecule type" value="mRNA"/>
</dbReference>
<dbReference type="EMBL" id="AF487278">
    <property type="protein sequence ID" value="AAM49570.1"/>
    <property type="molecule type" value="mRNA"/>
</dbReference>
<dbReference type="EMBL" id="AK134279">
    <property type="protein sequence ID" value="BAE22080.1"/>
    <property type="molecule type" value="mRNA"/>
</dbReference>
<dbReference type="EMBL" id="AK156734">
    <property type="protein sequence ID" value="BAE33828.1"/>
    <property type="molecule type" value="mRNA"/>
</dbReference>
<dbReference type="EMBL" id="CH466523">
    <property type="protein sequence ID" value="EDK99210.1"/>
    <property type="molecule type" value="Genomic_DNA"/>
</dbReference>
<dbReference type="EMBL" id="BC059003">
    <property type="protein sequence ID" value="AAH59003.1"/>
    <property type="molecule type" value="mRNA"/>
</dbReference>
<dbReference type="CCDS" id="CCDS20323.1"/>
<dbReference type="RefSeq" id="NP_001342584.1">
    <property type="nucleotide sequence ID" value="NM_001355655.1"/>
</dbReference>
<dbReference type="RefSeq" id="NP_067356.2">
    <property type="nucleotide sequence ID" value="NM_021381.3"/>
</dbReference>
<dbReference type="RefSeq" id="XP_006506494.1">
    <property type="nucleotide sequence ID" value="XM_006506431.3"/>
</dbReference>
<dbReference type="RefSeq" id="XP_006506495.1">
    <property type="nucleotide sequence ID" value="XM_006506432.5"/>
</dbReference>
<dbReference type="SMR" id="Q9JKL1"/>
<dbReference type="CORUM" id="Q9JKL1"/>
<dbReference type="FunCoup" id="Q9JKL1">
    <property type="interactions" value="195"/>
</dbReference>
<dbReference type="STRING" id="10090.ENSMUSP00000144999"/>
<dbReference type="ChEMBL" id="CHEMBL1949486"/>
<dbReference type="GlyCosmos" id="Q9JKL1">
    <property type="glycosylation" value="1 site, No reported glycans"/>
</dbReference>
<dbReference type="GlyGen" id="Q9JKL1">
    <property type="glycosylation" value="1 site"/>
</dbReference>
<dbReference type="iPTMnet" id="Q9JKL1"/>
<dbReference type="PhosphoSitePlus" id="Q9JKL1"/>
<dbReference type="PaxDb" id="10090-ENSMUSP00000059034"/>
<dbReference type="DNASU" id="58182"/>
<dbReference type="Ensembl" id="ENSMUST00000050887.9">
    <property type="protein sequence ID" value="ENSMUSP00000059034.8"/>
    <property type="gene ID" value="ENSMUSG00000049409.10"/>
</dbReference>
<dbReference type="Ensembl" id="ENSMUST00000204682.3">
    <property type="protein sequence ID" value="ENSMUSP00000144999.2"/>
    <property type="gene ID" value="ENSMUSG00000049409.10"/>
</dbReference>
<dbReference type="GeneID" id="58182"/>
<dbReference type="KEGG" id="mmu:58182"/>
<dbReference type="UCSC" id="uc009cto.1">
    <property type="organism name" value="mouse"/>
</dbReference>
<dbReference type="AGR" id="MGI:1929676"/>
<dbReference type="CTD" id="10887"/>
<dbReference type="MGI" id="MGI:1929676">
    <property type="gene designation" value="Prokr1"/>
</dbReference>
<dbReference type="VEuPathDB" id="HostDB:ENSMUSG00000049409"/>
<dbReference type="eggNOG" id="KOG3656">
    <property type="taxonomic scope" value="Eukaryota"/>
</dbReference>
<dbReference type="GeneTree" id="ENSGT00940000164891"/>
<dbReference type="HOGENOM" id="CLU_009579_6_0_1"/>
<dbReference type="InParanoid" id="Q9JKL1"/>
<dbReference type="OMA" id="CAATNYL"/>
<dbReference type="OrthoDB" id="10053194at2759"/>
<dbReference type="PhylomeDB" id="Q9JKL1"/>
<dbReference type="TreeFam" id="TF315303"/>
<dbReference type="Reactome" id="R-MMU-375276">
    <property type="pathway name" value="Peptide ligand-binding receptors"/>
</dbReference>
<dbReference type="Reactome" id="R-MMU-416476">
    <property type="pathway name" value="G alpha (q) signalling events"/>
</dbReference>
<dbReference type="BioGRID-ORCS" id="58182">
    <property type="hits" value="5 hits in 77 CRISPR screens"/>
</dbReference>
<dbReference type="PRO" id="PR:Q9JKL1"/>
<dbReference type="Proteomes" id="UP000000589">
    <property type="component" value="Chromosome 6"/>
</dbReference>
<dbReference type="RNAct" id="Q9JKL1">
    <property type="molecule type" value="protein"/>
</dbReference>
<dbReference type="Bgee" id="ENSMUSG00000049409">
    <property type="expression patterns" value="Expressed in lumbar dorsal root ganglion and 97 other cell types or tissues"/>
</dbReference>
<dbReference type="ExpressionAtlas" id="Q9JKL1">
    <property type="expression patterns" value="baseline and differential"/>
</dbReference>
<dbReference type="GO" id="GO:0005886">
    <property type="term" value="C:plasma membrane"/>
    <property type="evidence" value="ECO:0007669"/>
    <property type="project" value="UniProtKB-SubCell"/>
</dbReference>
<dbReference type="GO" id="GO:0004930">
    <property type="term" value="F:G protein-coupled receptor activity"/>
    <property type="evidence" value="ECO:0000304"/>
    <property type="project" value="MGI"/>
</dbReference>
<dbReference type="GO" id="GO:0004983">
    <property type="term" value="F:neuropeptide Y receptor activity"/>
    <property type="evidence" value="ECO:0007669"/>
    <property type="project" value="InterPro"/>
</dbReference>
<dbReference type="GO" id="GO:0007623">
    <property type="term" value="P:circadian rhythm"/>
    <property type="evidence" value="ECO:0000304"/>
    <property type="project" value="MGI"/>
</dbReference>
<dbReference type="GO" id="GO:0060976">
    <property type="term" value="P:coronary vasculature development"/>
    <property type="evidence" value="ECO:0000304"/>
    <property type="project" value="DFLAT"/>
</dbReference>
<dbReference type="GO" id="GO:0007186">
    <property type="term" value="P:G protein-coupled receptor signaling pathway"/>
    <property type="evidence" value="ECO:0000304"/>
    <property type="project" value="MGI"/>
</dbReference>
<dbReference type="GO" id="GO:0043066">
    <property type="term" value="P:negative regulation of apoptotic process"/>
    <property type="evidence" value="ECO:0007669"/>
    <property type="project" value="Ensembl"/>
</dbReference>
<dbReference type="CDD" id="cd15204">
    <property type="entry name" value="7tmA_prokineticin-R"/>
    <property type="match status" value="1"/>
</dbReference>
<dbReference type="FunFam" id="1.20.1070.10:FF:000069">
    <property type="entry name" value="Prokineticin receptor 2"/>
    <property type="match status" value="1"/>
</dbReference>
<dbReference type="Gene3D" id="1.20.1070.10">
    <property type="entry name" value="Rhodopsin 7-helix transmembrane proteins"/>
    <property type="match status" value="1"/>
</dbReference>
<dbReference type="InterPro" id="IPR000276">
    <property type="entry name" value="GPCR_Rhodpsn"/>
</dbReference>
<dbReference type="InterPro" id="IPR017452">
    <property type="entry name" value="GPCR_Rhodpsn_7TM"/>
</dbReference>
<dbReference type="InterPro" id="IPR000611">
    <property type="entry name" value="NPY_rcpt"/>
</dbReference>
<dbReference type="PANTHER" id="PTHR24238">
    <property type="entry name" value="G-PROTEIN COUPLED RECEPTOR"/>
    <property type="match status" value="1"/>
</dbReference>
<dbReference type="PANTHER" id="PTHR24238:SF74">
    <property type="entry name" value="PROKINETICIN RECEPTOR 2"/>
    <property type="match status" value="1"/>
</dbReference>
<dbReference type="Pfam" id="PF00001">
    <property type="entry name" value="7tm_1"/>
    <property type="match status" value="1"/>
</dbReference>
<dbReference type="PRINTS" id="PR00237">
    <property type="entry name" value="GPCRRHODOPSN"/>
</dbReference>
<dbReference type="PRINTS" id="PR01012">
    <property type="entry name" value="NRPEPTIDEYR"/>
</dbReference>
<dbReference type="SUPFAM" id="SSF81321">
    <property type="entry name" value="Family A G protein-coupled receptor-like"/>
    <property type="match status" value="1"/>
</dbReference>
<dbReference type="PROSITE" id="PS00237">
    <property type="entry name" value="G_PROTEIN_RECEP_F1_1"/>
    <property type="match status" value="1"/>
</dbReference>
<dbReference type="PROSITE" id="PS50262">
    <property type="entry name" value="G_PROTEIN_RECEP_F1_2"/>
    <property type="match status" value="1"/>
</dbReference>
<accession>Q9JKL1</accession>
<accession>Q3U0M4</accession>
<accession>Q6PD11</accession>
<feature type="chain" id="PRO_0000070080" description="Prokineticin receptor 1">
    <location>
        <begin position="1"/>
        <end position="393"/>
    </location>
</feature>
<feature type="topological domain" description="Extracellular" evidence="2">
    <location>
        <begin position="1"/>
        <end position="62"/>
    </location>
</feature>
<feature type="transmembrane region" description="Helical; Name=1" evidence="2">
    <location>
        <begin position="63"/>
        <end position="83"/>
    </location>
</feature>
<feature type="topological domain" description="Cytoplasmic" evidence="2">
    <location>
        <begin position="84"/>
        <end position="98"/>
    </location>
</feature>
<feature type="transmembrane region" description="Helical; Name=2" evidence="2">
    <location>
        <begin position="99"/>
        <end position="119"/>
    </location>
</feature>
<feature type="topological domain" description="Extracellular" evidence="2">
    <location>
        <begin position="120"/>
        <end position="146"/>
    </location>
</feature>
<feature type="transmembrane region" description="Helical; Name=3" evidence="2">
    <location>
        <begin position="147"/>
        <end position="167"/>
    </location>
</feature>
<feature type="topological domain" description="Cytoplasmic" evidence="2">
    <location>
        <begin position="168"/>
        <end position="179"/>
    </location>
</feature>
<feature type="transmembrane region" description="Helical; Name=4" evidence="2">
    <location>
        <begin position="180"/>
        <end position="200"/>
    </location>
</feature>
<feature type="topological domain" description="Extracellular" evidence="2">
    <location>
        <begin position="201"/>
        <end position="232"/>
    </location>
</feature>
<feature type="transmembrane region" description="Helical; Name=5" evidence="2">
    <location>
        <begin position="233"/>
        <end position="253"/>
    </location>
</feature>
<feature type="topological domain" description="Cytoplasmic" evidence="2">
    <location>
        <begin position="254"/>
        <end position="282"/>
    </location>
</feature>
<feature type="transmembrane region" description="Helical; Name=6" evidence="2">
    <location>
        <begin position="283"/>
        <end position="303"/>
    </location>
</feature>
<feature type="topological domain" description="Extracellular" evidence="2">
    <location>
        <begin position="304"/>
        <end position="322"/>
    </location>
</feature>
<feature type="transmembrane region" description="Helical; Name=7" evidence="2">
    <location>
        <begin position="323"/>
        <end position="343"/>
    </location>
</feature>
<feature type="topological domain" description="Cytoplasmic" evidence="2">
    <location>
        <begin position="344"/>
        <end position="393"/>
    </location>
</feature>
<feature type="glycosylation site" description="N-linked (GlcNAc...) asparagine" evidence="2">
    <location>
        <position position="11"/>
    </location>
</feature>
<feature type="disulfide bond" evidence="3">
    <location>
        <begin position="137"/>
        <end position="217"/>
    </location>
</feature>
<feature type="sequence conflict" description="In Ref. 1; AAF43706 and 2; AAM49570." evidence="4" ref="1 2">
    <original>RL</original>
    <variation>TV</variation>
    <location>
        <begin position="275"/>
        <end position="276"/>
    </location>
</feature>
<protein>
    <recommendedName>
        <fullName>Prokineticin receptor 1</fullName>
        <shortName>PK-R1</shortName>
    </recommendedName>
    <alternativeName>
        <fullName>G-protein coupled receptor 73</fullName>
    </alternativeName>
</protein>
<reference key="1">
    <citation type="journal article" date="2000" name="Biochim. Biophys. Acta">
        <title>Y-receptor-like genes GPR72 and GPR73: molecular cloning, genomic organisation and assignment to human chromosome 11q21.1 and 2p14 and mouse chromosome 9 and 6.</title>
        <authorList>
            <person name="Parker R."/>
            <person name="Liu M."/>
            <person name="Eyre H.J."/>
            <person name="Copeland N.G."/>
            <person name="Gilbert D.J."/>
            <person name="Crawford J."/>
            <person name="Sutherland G.R."/>
            <person name="Jenkins N.A."/>
            <person name="Herzog H."/>
        </authorList>
    </citation>
    <scope>NUCLEOTIDE SEQUENCE [MRNA]</scope>
    <source>
        <tissue>Brain</tissue>
    </source>
</reference>
<reference key="2">
    <citation type="journal article" date="2002" name="Nature">
        <title>Prokineticin 2 transmits the behavioural circadian rhythm of the suprachiasmatic nucleus.</title>
        <authorList>
            <person name="Cheng M.Y."/>
            <person name="Bullock C.M."/>
            <person name="Li C."/>
            <person name="Lee A.G."/>
            <person name="Bermak J.C."/>
            <person name="Belluzzi J."/>
            <person name="Weaver D.R."/>
            <person name="Leslie F.M."/>
            <person name="Zhou Q.-Y."/>
        </authorList>
    </citation>
    <scope>NUCLEOTIDE SEQUENCE [MRNA]</scope>
    <source>
        <strain>C57BL/6J</strain>
    </source>
</reference>
<reference key="3">
    <citation type="journal article" date="2005" name="Science">
        <title>The transcriptional landscape of the mammalian genome.</title>
        <authorList>
            <person name="Carninci P."/>
            <person name="Kasukawa T."/>
            <person name="Katayama S."/>
            <person name="Gough J."/>
            <person name="Frith M.C."/>
            <person name="Maeda N."/>
            <person name="Oyama R."/>
            <person name="Ravasi T."/>
            <person name="Lenhard B."/>
            <person name="Wells C."/>
            <person name="Kodzius R."/>
            <person name="Shimokawa K."/>
            <person name="Bajic V.B."/>
            <person name="Brenner S.E."/>
            <person name="Batalov S."/>
            <person name="Forrest A.R."/>
            <person name="Zavolan M."/>
            <person name="Davis M.J."/>
            <person name="Wilming L.G."/>
            <person name="Aidinis V."/>
            <person name="Allen J.E."/>
            <person name="Ambesi-Impiombato A."/>
            <person name="Apweiler R."/>
            <person name="Aturaliya R.N."/>
            <person name="Bailey T.L."/>
            <person name="Bansal M."/>
            <person name="Baxter L."/>
            <person name="Beisel K.W."/>
            <person name="Bersano T."/>
            <person name="Bono H."/>
            <person name="Chalk A.M."/>
            <person name="Chiu K.P."/>
            <person name="Choudhary V."/>
            <person name="Christoffels A."/>
            <person name="Clutterbuck D.R."/>
            <person name="Crowe M.L."/>
            <person name="Dalla E."/>
            <person name="Dalrymple B.P."/>
            <person name="de Bono B."/>
            <person name="Della Gatta G."/>
            <person name="di Bernardo D."/>
            <person name="Down T."/>
            <person name="Engstrom P."/>
            <person name="Fagiolini M."/>
            <person name="Faulkner G."/>
            <person name="Fletcher C.F."/>
            <person name="Fukushima T."/>
            <person name="Furuno M."/>
            <person name="Futaki S."/>
            <person name="Gariboldi M."/>
            <person name="Georgii-Hemming P."/>
            <person name="Gingeras T.R."/>
            <person name="Gojobori T."/>
            <person name="Green R.E."/>
            <person name="Gustincich S."/>
            <person name="Harbers M."/>
            <person name="Hayashi Y."/>
            <person name="Hensch T.K."/>
            <person name="Hirokawa N."/>
            <person name="Hill D."/>
            <person name="Huminiecki L."/>
            <person name="Iacono M."/>
            <person name="Ikeo K."/>
            <person name="Iwama A."/>
            <person name="Ishikawa T."/>
            <person name="Jakt M."/>
            <person name="Kanapin A."/>
            <person name="Katoh M."/>
            <person name="Kawasawa Y."/>
            <person name="Kelso J."/>
            <person name="Kitamura H."/>
            <person name="Kitano H."/>
            <person name="Kollias G."/>
            <person name="Krishnan S.P."/>
            <person name="Kruger A."/>
            <person name="Kummerfeld S.K."/>
            <person name="Kurochkin I.V."/>
            <person name="Lareau L.F."/>
            <person name="Lazarevic D."/>
            <person name="Lipovich L."/>
            <person name="Liu J."/>
            <person name="Liuni S."/>
            <person name="McWilliam S."/>
            <person name="Madan Babu M."/>
            <person name="Madera M."/>
            <person name="Marchionni L."/>
            <person name="Matsuda H."/>
            <person name="Matsuzawa S."/>
            <person name="Miki H."/>
            <person name="Mignone F."/>
            <person name="Miyake S."/>
            <person name="Morris K."/>
            <person name="Mottagui-Tabar S."/>
            <person name="Mulder N."/>
            <person name="Nakano N."/>
            <person name="Nakauchi H."/>
            <person name="Ng P."/>
            <person name="Nilsson R."/>
            <person name="Nishiguchi S."/>
            <person name="Nishikawa S."/>
            <person name="Nori F."/>
            <person name="Ohara O."/>
            <person name="Okazaki Y."/>
            <person name="Orlando V."/>
            <person name="Pang K.C."/>
            <person name="Pavan W.J."/>
            <person name="Pavesi G."/>
            <person name="Pesole G."/>
            <person name="Petrovsky N."/>
            <person name="Piazza S."/>
            <person name="Reed J."/>
            <person name="Reid J.F."/>
            <person name="Ring B.Z."/>
            <person name="Ringwald M."/>
            <person name="Rost B."/>
            <person name="Ruan Y."/>
            <person name="Salzberg S.L."/>
            <person name="Sandelin A."/>
            <person name="Schneider C."/>
            <person name="Schoenbach C."/>
            <person name="Sekiguchi K."/>
            <person name="Semple C.A."/>
            <person name="Seno S."/>
            <person name="Sessa L."/>
            <person name="Sheng Y."/>
            <person name="Shibata Y."/>
            <person name="Shimada H."/>
            <person name="Shimada K."/>
            <person name="Silva D."/>
            <person name="Sinclair B."/>
            <person name="Sperling S."/>
            <person name="Stupka E."/>
            <person name="Sugiura K."/>
            <person name="Sultana R."/>
            <person name="Takenaka Y."/>
            <person name="Taki K."/>
            <person name="Tammoja K."/>
            <person name="Tan S.L."/>
            <person name="Tang S."/>
            <person name="Taylor M.S."/>
            <person name="Tegner J."/>
            <person name="Teichmann S.A."/>
            <person name="Ueda H.R."/>
            <person name="van Nimwegen E."/>
            <person name="Verardo R."/>
            <person name="Wei C.L."/>
            <person name="Yagi K."/>
            <person name="Yamanishi H."/>
            <person name="Zabarovsky E."/>
            <person name="Zhu S."/>
            <person name="Zimmer A."/>
            <person name="Hide W."/>
            <person name="Bult C."/>
            <person name="Grimmond S.M."/>
            <person name="Teasdale R.D."/>
            <person name="Liu E.T."/>
            <person name="Brusic V."/>
            <person name="Quackenbush J."/>
            <person name="Wahlestedt C."/>
            <person name="Mattick J.S."/>
            <person name="Hume D.A."/>
            <person name="Kai C."/>
            <person name="Sasaki D."/>
            <person name="Tomaru Y."/>
            <person name="Fukuda S."/>
            <person name="Kanamori-Katayama M."/>
            <person name="Suzuki M."/>
            <person name="Aoki J."/>
            <person name="Arakawa T."/>
            <person name="Iida J."/>
            <person name="Imamura K."/>
            <person name="Itoh M."/>
            <person name="Kato T."/>
            <person name="Kawaji H."/>
            <person name="Kawagashira N."/>
            <person name="Kawashima T."/>
            <person name="Kojima M."/>
            <person name="Kondo S."/>
            <person name="Konno H."/>
            <person name="Nakano K."/>
            <person name="Ninomiya N."/>
            <person name="Nishio T."/>
            <person name="Okada M."/>
            <person name="Plessy C."/>
            <person name="Shibata K."/>
            <person name="Shiraki T."/>
            <person name="Suzuki S."/>
            <person name="Tagami M."/>
            <person name="Waki K."/>
            <person name="Watahiki A."/>
            <person name="Okamura-Oho Y."/>
            <person name="Suzuki H."/>
            <person name="Kawai J."/>
            <person name="Hayashizaki Y."/>
        </authorList>
    </citation>
    <scope>NUCLEOTIDE SEQUENCE [LARGE SCALE MRNA]</scope>
    <source>
        <strain>C57BL/6J</strain>
        <strain>NOD</strain>
        <tissue>Forelimb</tissue>
        <tissue>Spleen</tissue>
    </source>
</reference>
<reference key="4">
    <citation type="submission" date="2005-07" db="EMBL/GenBank/DDBJ databases">
        <authorList>
            <person name="Mural R.J."/>
            <person name="Adams M.D."/>
            <person name="Myers E.W."/>
            <person name="Smith H.O."/>
            <person name="Venter J.C."/>
        </authorList>
    </citation>
    <scope>NUCLEOTIDE SEQUENCE [LARGE SCALE GENOMIC DNA]</scope>
</reference>
<reference key="5">
    <citation type="journal article" date="2004" name="Genome Res.">
        <title>The status, quality, and expansion of the NIH full-length cDNA project: the Mammalian Gene Collection (MGC).</title>
        <authorList>
            <consortium name="The MGC Project Team"/>
        </authorList>
    </citation>
    <scope>NUCLEOTIDE SEQUENCE [LARGE SCALE MRNA]</scope>
    <source>
        <strain>C57BL/6J</strain>
        <tissue>Brain</tissue>
    </source>
</reference>
<keyword id="KW-1003">Cell membrane</keyword>
<keyword id="KW-1015">Disulfide bond</keyword>
<keyword id="KW-0297">G-protein coupled receptor</keyword>
<keyword id="KW-0325">Glycoprotein</keyword>
<keyword id="KW-0472">Membrane</keyword>
<keyword id="KW-0675">Receptor</keyword>
<keyword id="KW-1185">Reference proteome</keyword>
<keyword id="KW-0807">Transducer</keyword>
<keyword id="KW-0812">Transmembrane</keyword>
<keyword id="KW-1133">Transmembrane helix</keyword>
<name>PKR1_MOUSE</name>
<evidence type="ECO:0000250" key="1"/>
<evidence type="ECO:0000255" key="2"/>
<evidence type="ECO:0000255" key="3">
    <source>
        <dbReference type="PROSITE-ProRule" id="PRU00521"/>
    </source>
</evidence>
<evidence type="ECO:0000305" key="4"/>